<dbReference type="EMBL" id="AE005174">
    <property type="protein sequence ID" value="AAG54822.1"/>
    <property type="molecule type" value="Genomic_DNA"/>
</dbReference>
<dbReference type="EMBL" id="BA000007">
    <property type="protein sequence ID" value="BAB33949.1"/>
    <property type="molecule type" value="Genomic_DNA"/>
</dbReference>
<dbReference type="PIR" id="F90694">
    <property type="entry name" value="F90694"/>
</dbReference>
<dbReference type="RefSeq" id="NP_308553.1">
    <property type="nucleotide sequence ID" value="NC_002695.1"/>
</dbReference>
<dbReference type="RefSeq" id="WP_000678201.1">
    <property type="nucleotide sequence ID" value="NZ_VOAI01000005.1"/>
</dbReference>
<dbReference type="SMR" id="P0A6Z5"/>
<dbReference type="STRING" id="155864.Z0590"/>
<dbReference type="GeneID" id="914630"/>
<dbReference type="GeneID" id="93776977"/>
<dbReference type="KEGG" id="ece:Z0590"/>
<dbReference type="KEGG" id="ecs:ECs_0526"/>
<dbReference type="PATRIC" id="fig|386585.9.peg.632"/>
<dbReference type="eggNOG" id="COG0326">
    <property type="taxonomic scope" value="Bacteria"/>
</dbReference>
<dbReference type="HOGENOM" id="CLU_006684_3_0_6"/>
<dbReference type="OMA" id="MRRMKEM"/>
<dbReference type="Proteomes" id="UP000000558">
    <property type="component" value="Chromosome"/>
</dbReference>
<dbReference type="Proteomes" id="UP000002519">
    <property type="component" value="Chromosome"/>
</dbReference>
<dbReference type="GO" id="GO:0005737">
    <property type="term" value="C:cytoplasm"/>
    <property type="evidence" value="ECO:0007669"/>
    <property type="project" value="UniProtKB-SubCell"/>
</dbReference>
<dbReference type="GO" id="GO:0005524">
    <property type="term" value="F:ATP binding"/>
    <property type="evidence" value="ECO:0007669"/>
    <property type="project" value="UniProtKB-UniRule"/>
</dbReference>
<dbReference type="GO" id="GO:0016887">
    <property type="term" value="F:ATP hydrolysis activity"/>
    <property type="evidence" value="ECO:0007669"/>
    <property type="project" value="InterPro"/>
</dbReference>
<dbReference type="GO" id="GO:0140662">
    <property type="term" value="F:ATP-dependent protein folding chaperone"/>
    <property type="evidence" value="ECO:0007669"/>
    <property type="project" value="InterPro"/>
</dbReference>
<dbReference type="GO" id="GO:0051082">
    <property type="term" value="F:unfolded protein binding"/>
    <property type="evidence" value="ECO:0007669"/>
    <property type="project" value="UniProtKB-UniRule"/>
</dbReference>
<dbReference type="CDD" id="cd16927">
    <property type="entry name" value="HATPase_Hsp90-like"/>
    <property type="match status" value="1"/>
</dbReference>
<dbReference type="FunFam" id="1.20.120.790:FF:000002">
    <property type="entry name" value="Molecular chaperone HtpG"/>
    <property type="match status" value="1"/>
</dbReference>
<dbReference type="FunFam" id="3.30.230.80:FF:000002">
    <property type="entry name" value="Molecular chaperone HtpG"/>
    <property type="match status" value="1"/>
</dbReference>
<dbReference type="FunFam" id="3.30.565.10:FF:000009">
    <property type="entry name" value="Molecular chaperone HtpG"/>
    <property type="match status" value="1"/>
</dbReference>
<dbReference type="FunFam" id="3.40.50.11260:FF:000002">
    <property type="entry name" value="Molecular chaperone HtpG"/>
    <property type="match status" value="1"/>
</dbReference>
<dbReference type="Gene3D" id="3.30.230.80">
    <property type="match status" value="1"/>
</dbReference>
<dbReference type="Gene3D" id="3.40.50.11260">
    <property type="match status" value="1"/>
</dbReference>
<dbReference type="Gene3D" id="1.20.120.790">
    <property type="entry name" value="Heat shock protein 90, C-terminal domain"/>
    <property type="match status" value="1"/>
</dbReference>
<dbReference type="Gene3D" id="3.30.565.10">
    <property type="entry name" value="Histidine kinase-like ATPase, C-terminal domain"/>
    <property type="match status" value="1"/>
</dbReference>
<dbReference type="HAMAP" id="MF_00505">
    <property type="entry name" value="HSP90"/>
    <property type="match status" value="1"/>
</dbReference>
<dbReference type="InterPro" id="IPR036890">
    <property type="entry name" value="HATPase_C_sf"/>
</dbReference>
<dbReference type="InterPro" id="IPR019805">
    <property type="entry name" value="Heat_shock_protein_90_CS"/>
</dbReference>
<dbReference type="InterPro" id="IPR037196">
    <property type="entry name" value="HSP90_C"/>
</dbReference>
<dbReference type="InterPro" id="IPR001404">
    <property type="entry name" value="Hsp90_fam"/>
</dbReference>
<dbReference type="InterPro" id="IPR020575">
    <property type="entry name" value="Hsp90_N"/>
</dbReference>
<dbReference type="InterPro" id="IPR020568">
    <property type="entry name" value="Ribosomal_Su5_D2-typ_SF"/>
</dbReference>
<dbReference type="NCBIfam" id="NF003555">
    <property type="entry name" value="PRK05218.1"/>
    <property type="match status" value="1"/>
</dbReference>
<dbReference type="PANTHER" id="PTHR11528">
    <property type="entry name" value="HEAT SHOCK PROTEIN 90 FAMILY MEMBER"/>
    <property type="match status" value="1"/>
</dbReference>
<dbReference type="Pfam" id="PF13589">
    <property type="entry name" value="HATPase_c_3"/>
    <property type="match status" value="1"/>
</dbReference>
<dbReference type="Pfam" id="PF00183">
    <property type="entry name" value="HSP90"/>
    <property type="match status" value="1"/>
</dbReference>
<dbReference type="PIRSF" id="PIRSF002583">
    <property type="entry name" value="Hsp90"/>
    <property type="match status" value="1"/>
</dbReference>
<dbReference type="PRINTS" id="PR00775">
    <property type="entry name" value="HEATSHOCK90"/>
</dbReference>
<dbReference type="SMART" id="SM00387">
    <property type="entry name" value="HATPase_c"/>
    <property type="match status" value="1"/>
</dbReference>
<dbReference type="SUPFAM" id="SSF55874">
    <property type="entry name" value="ATPase domain of HSP90 chaperone/DNA topoisomerase II/histidine kinase"/>
    <property type="match status" value="1"/>
</dbReference>
<dbReference type="SUPFAM" id="SSF110942">
    <property type="entry name" value="HSP90 C-terminal domain"/>
    <property type="match status" value="1"/>
</dbReference>
<dbReference type="SUPFAM" id="SSF54211">
    <property type="entry name" value="Ribosomal protein S5 domain 2-like"/>
    <property type="match status" value="1"/>
</dbReference>
<dbReference type="PROSITE" id="PS00298">
    <property type="entry name" value="HSP90"/>
    <property type="match status" value="1"/>
</dbReference>
<gene>
    <name evidence="1" type="primary">htpG</name>
    <name type="ordered locus">Z0590</name>
    <name type="ordered locus">ECs0526</name>
</gene>
<feature type="chain" id="PRO_0000062987" description="Chaperone protein HtpG">
    <location>
        <begin position="1"/>
        <end position="624"/>
    </location>
</feature>
<feature type="region of interest" description="A; substrate-binding" evidence="1">
    <location>
        <begin position="1"/>
        <end position="336"/>
    </location>
</feature>
<feature type="region of interest" description="B" evidence="1">
    <location>
        <begin position="337"/>
        <end position="552"/>
    </location>
</feature>
<feature type="region of interest" description="C" evidence="1">
    <location>
        <begin position="553"/>
        <end position="624"/>
    </location>
</feature>
<sequence>MKGQETRGFQSEVKQLLHLMIHSLYSNKEIFLRELISNASDAADKLRFRALSNPDLYEGDGELRVRVSFDKDKRTLTISDNGVGMTRDEVIDHLGTIAKSGTKSFLESLGSDQAKDSQLIGQFGVGFYSAFIVADKVTVRTRAAGEKPENGVFWESAGEGEYTVADITKEDRGTEITLHLREGEDEFLDDWRVRSIISKYSDHIALPVEIEKREEKDGETVISWEKINKAQALWTRNKSEITDEEYKEFYKHIAHDFNDPLTWSHNRVEGKQEYTSLLYIPSQAPWDMWNRDHKHGLKLYVQRVFIMDDAEQFMPNYLRFVRGLIDSSDLPLNVSREILQDSTVTRNLRNALTKRVLQMLEKLAKDDAEKYQTFWQQFGLVLKEGPAEDFANQEAIAKLLRFASTHTDSSAQTVSLEDYVSRMKEGQEKIYYITADSYAAAKSSPHLELLRKKGIEVLLLSDRIDEWMMNYLTEFDGKPFQSVSKVDESLEKLADEVDESAKEAEKALTPFIDRVKALLGERVKDVRLTHRLTDTPAIVSTDADEMSTQMAKLFAAAGQKVPEVKYIFELNPDHVLVKRAADTEDEAKFSEWVELLLDQALLAERGTLEDPNLFIRRMNQLLVS</sequence>
<organism>
    <name type="scientific">Escherichia coli O157:H7</name>
    <dbReference type="NCBI Taxonomy" id="83334"/>
    <lineage>
        <taxon>Bacteria</taxon>
        <taxon>Pseudomonadati</taxon>
        <taxon>Pseudomonadota</taxon>
        <taxon>Gammaproteobacteria</taxon>
        <taxon>Enterobacterales</taxon>
        <taxon>Enterobacteriaceae</taxon>
        <taxon>Escherichia</taxon>
    </lineage>
</organism>
<evidence type="ECO:0000255" key="1">
    <source>
        <dbReference type="HAMAP-Rule" id="MF_00505"/>
    </source>
</evidence>
<keyword id="KW-0067">ATP-binding</keyword>
<keyword id="KW-0143">Chaperone</keyword>
<keyword id="KW-0963">Cytoplasm</keyword>
<keyword id="KW-0547">Nucleotide-binding</keyword>
<keyword id="KW-1185">Reference proteome</keyword>
<keyword id="KW-0346">Stress response</keyword>
<protein>
    <recommendedName>
        <fullName evidence="1">Chaperone protein HtpG</fullName>
    </recommendedName>
    <alternativeName>
        <fullName evidence="1">Heat shock protein HtpG</fullName>
    </alternativeName>
    <alternativeName>
        <fullName evidence="1">High temperature protein G</fullName>
    </alternativeName>
</protein>
<name>HTPG_ECO57</name>
<comment type="function">
    <text evidence="1">Molecular chaperone. Has ATPase activity.</text>
</comment>
<comment type="subunit">
    <text evidence="1">Homodimer.</text>
</comment>
<comment type="subcellular location">
    <subcellularLocation>
        <location evidence="1">Cytoplasm</location>
    </subcellularLocation>
</comment>
<comment type="similarity">
    <text evidence="1">Belongs to the heat shock protein 90 family.</text>
</comment>
<accession>P0A6Z5</accession>
<accession>P10413</accession>
<proteinExistence type="inferred from homology"/>
<reference key="1">
    <citation type="journal article" date="2001" name="Nature">
        <title>Genome sequence of enterohaemorrhagic Escherichia coli O157:H7.</title>
        <authorList>
            <person name="Perna N.T."/>
            <person name="Plunkett G. III"/>
            <person name="Burland V."/>
            <person name="Mau B."/>
            <person name="Glasner J.D."/>
            <person name="Rose D.J."/>
            <person name="Mayhew G.F."/>
            <person name="Evans P.S."/>
            <person name="Gregor J."/>
            <person name="Kirkpatrick H.A."/>
            <person name="Posfai G."/>
            <person name="Hackett J."/>
            <person name="Klink S."/>
            <person name="Boutin A."/>
            <person name="Shao Y."/>
            <person name="Miller L."/>
            <person name="Grotbeck E.J."/>
            <person name="Davis N.W."/>
            <person name="Lim A."/>
            <person name="Dimalanta E.T."/>
            <person name="Potamousis K."/>
            <person name="Apodaca J."/>
            <person name="Anantharaman T.S."/>
            <person name="Lin J."/>
            <person name="Yen G."/>
            <person name="Schwartz D.C."/>
            <person name="Welch R.A."/>
            <person name="Blattner F.R."/>
        </authorList>
    </citation>
    <scope>NUCLEOTIDE SEQUENCE [LARGE SCALE GENOMIC DNA]</scope>
    <source>
        <strain>O157:H7 / EDL933 / ATCC 700927 / EHEC</strain>
    </source>
</reference>
<reference key="2">
    <citation type="journal article" date="2001" name="DNA Res.">
        <title>Complete genome sequence of enterohemorrhagic Escherichia coli O157:H7 and genomic comparison with a laboratory strain K-12.</title>
        <authorList>
            <person name="Hayashi T."/>
            <person name="Makino K."/>
            <person name="Ohnishi M."/>
            <person name="Kurokawa K."/>
            <person name="Ishii K."/>
            <person name="Yokoyama K."/>
            <person name="Han C.-G."/>
            <person name="Ohtsubo E."/>
            <person name="Nakayama K."/>
            <person name="Murata T."/>
            <person name="Tanaka M."/>
            <person name="Tobe T."/>
            <person name="Iida T."/>
            <person name="Takami H."/>
            <person name="Honda T."/>
            <person name="Sasakawa C."/>
            <person name="Ogasawara N."/>
            <person name="Yasunaga T."/>
            <person name="Kuhara S."/>
            <person name="Shiba T."/>
            <person name="Hattori M."/>
            <person name="Shinagawa H."/>
        </authorList>
    </citation>
    <scope>NUCLEOTIDE SEQUENCE [LARGE SCALE GENOMIC DNA]</scope>
    <source>
        <strain>O157:H7 / Sakai / RIMD 0509952 / EHEC</strain>
    </source>
</reference>